<proteinExistence type="inferred from homology"/>
<organism>
    <name type="scientific">Escherichia coli O81 (strain ED1a)</name>
    <dbReference type="NCBI Taxonomy" id="585397"/>
    <lineage>
        <taxon>Bacteria</taxon>
        <taxon>Pseudomonadati</taxon>
        <taxon>Pseudomonadota</taxon>
        <taxon>Gammaproteobacteria</taxon>
        <taxon>Enterobacterales</taxon>
        <taxon>Enterobacteriaceae</taxon>
        <taxon>Escherichia</taxon>
    </lineage>
</organism>
<dbReference type="EC" id="2.7.7.-" evidence="1"/>
<dbReference type="EC" id="2.7.7.108" evidence="1"/>
<dbReference type="EMBL" id="CU928162">
    <property type="protein sequence ID" value="CAR08101.2"/>
    <property type="molecule type" value="Genomic_DNA"/>
</dbReference>
<dbReference type="RefSeq" id="WP_000175645.1">
    <property type="nucleotide sequence ID" value="NC_011745.1"/>
</dbReference>
<dbReference type="SMR" id="B7MVI5"/>
<dbReference type="KEGG" id="ecq:ECED1_1908"/>
<dbReference type="HOGENOM" id="CLU_010245_4_1_6"/>
<dbReference type="Proteomes" id="UP000000748">
    <property type="component" value="Chromosome"/>
</dbReference>
<dbReference type="GO" id="GO:0070733">
    <property type="term" value="F:AMPylase activity"/>
    <property type="evidence" value="ECO:0007669"/>
    <property type="project" value="TreeGrafter"/>
</dbReference>
<dbReference type="GO" id="GO:0005524">
    <property type="term" value="F:ATP binding"/>
    <property type="evidence" value="ECO:0007669"/>
    <property type="project" value="UniProtKB-UniRule"/>
</dbReference>
<dbReference type="GO" id="GO:0000287">
    <property type="term" value="F:magnesium ion binding"/>
    <property type="evidence" value="ECO:0007669"/>
    <property type="project" value="UniProtKB-UniRule"/>
</dbReference>
<dbReference type="HAMAP" id="MF_00692">
    <property type="entry name" value="YdiU_SelO"/>
    <property type="match status" value="1"/>
</dbReference>
<dbReference type="InterPro" id="IPR054838">
    <property type="entry name" value="adnlytase_SelO"/>
</dbReference>
<dbReference type="InterPro" id="IPR003846">
    <property type="entry name" value="SelO"/>
</dbReference>
<dbReference type="NCBIfam" id="NF040880">
    <property type="entry name" value="adnlytase_SelO"/>
    <property type="match status" value="1"/>
</dbReference>
<dbReference type="NCBIfam" id="NF000658">
    <property type="entry name" value="PRK00029.1"/>
    <property type="match status" value="1"/>
</dbReference>
<dbReference type="PANTHER" id="PTHR32057">
    <property type="entry name" value="PROTEIN ADENYLYLTRANSFERASE SELO, MITOCHONDRIAL"/>
    <property type="match status" value="1"/>
</dbReference>
<dbReference type="PANTHER" id="PTHR32057:SF14">
    <property type="entry name" value="PROTEIN ADENYLYLTRANSFERASE SELO, MITOCHONDRIAL"/>
    <property type="match status" value="1"/>
</dbReference>
<dbReference type="Pfam" id="PF02696">
    <property type="entry name" value="SelO"/>
    <property type="match status" value="1"/>
</dbReference>
<evidence type="ECO:0000255" key="1">
    <source>
        <dbReference type="HAMAP-Rule" id="MF_00692"/>
    </source>
</evidence>
<keyword id="KW-0067">ATP-binding</keyword>
<keyword id="KW-0460">Magnesium</keyword>
<keyword id="KW-0464">Manganese</keyword>
<keyword id="KW-0479">Metal-binding</keyword>
<keyword id="KW-0547">Nucleotide-binding</keyword>
<keyword id="KW-0548">Nucleotidyltransferase</keyword>
<keyword id="KW-0808">Transferase</keyword>
<comment type="function">
    <text evidence="1">Nucleotidyltransferase involved in the post-translational modification of proteins. It can catalyze the addition of adenosine monophosphate (AMP) or uridine monophosphate (UMP) to a protein, resulting in modifications known as AMPylation and UMPylation.</text>
</comment>
<comment type="catalytic activity">
    <reaction evidence="1">
        <text>L-seryl-[protein] + ATP = 3-O-(5'-adenylyl)-L-seryl-[protein] + diphosphate</text>
        <dbReference type="Rhea" id="RHEA:58120"/>
        <dbReference type="Rhea" id="RHEA-COMP:9863"/>
        <dbReference type="Rhea" id="RHEA-COMP:15073"/>
        <dbReference type="ChEBI" id="CHEBI:29999"/>
        <dbReference type="ChEBI" id="CHEBI:30616"/>
        <dbReference type="ChEBI" id="CHEBI:33019"/>
        <dbReference type="ChEBI" id="CHEBI:142516"/>
        <dbReference type="EC" id="2.7.7.108"/>
    </reaction>
</comment>
<comment type="catalytic activity">
    <reaction evidence="1">
        <text>L-threonyl-[protein] + ATP = 3-O-(5'-adenylyl)-L-threonyl-[protein] + diphosphate</text>
        <dbReference type="Rhea" id="RHEA:54292"/>
        <dbReference type="Rhea" id="RHEA-COMP:11060"/>
        <dbReference type="Rhea" id="RHEA-COMP:13847"/>
        <dbReference type="ChEBI" id="CHEBI:30013"/>
        <dbReference type="ChEBI" id="CHEBI:30616"/>
        <dbReference type="ChEBI" id="CHEBI:33019"/>
        <dbReference type="ChEBI" id="CHEBI:138113"/>
        <dbReference type="EC" id="2.7.7.108"/>
    </reaction>
</comment>
<comment type="catalytic activity">
    <reaction evidence="1">
        <text>L-tyrosyl-[protein] + ATP = O-(5'-adenylyl)-L-tyrosyl-[protein] + diphosphate</text>
        <dbReference type="Rhea" id="RHEA:54288"/>
        <dbReference type="Rhea" id="RHEA-COMP:10136"/>
        <dbReference type="Rhea" id="RHEA-COMP:13846"/>
        <dbReference type="ChEBI" id="CHEBI:30616"/>
        <dbReference type="ChEBI" id="CHEBI:33019"/>
        <dbReference type="ChEBI" id="CHEBI:46858"/>
        <dbReference type="ChEBI" id="CHEBI:83624"/>
        <dbReference type="EC" id="2.7.7.108"/>
    </reaction>
</comment>
<comment type="catalytic activity">
    <reaction evidence="1">
        <text>L-histidyl-[protein] + UTP = N(tele)-(5'-uridylyl)-L-histidyl-[protein] + diphosphate</text>
        <dbReference type="Rhea" id="RHEA:83891"/>
        <dbReference type="Rhea" id="RHEA-COMP:9745"/>
        <dbReference type="Rhea" id="RHEA-COMP:20239"/>
        <dbReference type="ChEBI" id="CHEBI:29979"/>
        <dbReference type="ChEBI" id="CHEBI:33019"/>
        <dbReference type="ChEBI" id="CHEBI:46398"/>
        <dbReference type="ChEBI" id="CHEBI:233474"/>
    </reaction>
</comment>
<comment type="catalytic activity">
    <reaction evidence="1">
        <text>L-seryl-[protein] + UTP = O-(5'-uridylyl)-L-seryl-[protein] + diphosphate</text>
        <dbReference type="Rhea" id="RHEA:64604"/>
        <dbReference type="Rhea" id="RHEA-COMP:9863"/>
        <dbReference type="Rhea" id="RHEA-COMP:16635"/>
        <dbReference type="ChEBI" id="CHEBI:29999"/>
        <dbReference type="ChEBI" id="CHEBI:33019"/>
        <dbReference type="ChEBI" id="CHEBI:46398"/>
        <dbReference type="ChEBI" id="CHEBI:156051"/>
    </reaction>
</comment>
<comment type="catalytic activity">
    <reaction evidence="1">
        <text>L-tyrosyl-[protein] + UTP = O-(5'-uridylyl)-L-tyrosyl-[protein] + diphosphate</text>
        <dbReference type="Rhea" id="RHEA:83887"/>
        <dbReference type="Rhea" id="RHEA-COMP:10136"/>
        <dbReference type="Rhea" id="RHEA-COMP:20238"/>
        <dbReference type="ChEBI" id="CHEBI:33019"/>
        <dbReference type="ChEBI" id="CHEBI:46398"/>
        <dbReference type="ChEBI" id="CHEBI:46858"/>
        <dbReference type="ChEBI" id="CHEBI:90602"/>
    </reaction>
</comment>
<comment type="cofactor">
    <cofactor evidence="1">
        <name>Mg(2+)</name>
        <dbReference type="ChEBI" id="CHEBI:18420"/>
    </cofactor>
    <cofactor evidence="1">
        <name>Mn(2+)</name>
        <dbReference type="ChEBI" id="CHEBI:29035"/>
    </cofactor>
</comment>
<comment type="similarity">
    <text evidence="1">Belongs to the SELO family.</text>
</comment>
<protein>
    <recommendedName>
        <fullName evidence="1">Protein nucleotidyltransferase YdiU</fullName>
        <ecNumber evidence="1">2.7.7.-</ecNumber>
    </recommendedName>
    <alternativeName>
        <fullName evidence="1">Protein adenylyltransferase YdiU</fullName>
        <ecNumber evidence="1">2.7.7.108</ecNumber>
    </alternativeName>
    <alternativeName>
        <fullName evidence="1">Protein uridylyltransferase YdiU</fullName>
        <ecNumber evidence="1">2.7.7.-</ecNumber>
    </alternativeName>
</protein>
<name>SELO_ECO81</name>
<feature type="chain" id="PRO_1000200062" description="Protein nucleotidyltransferase YdiU">
    <location>
        <begin position="1"/>
        <end position="478"/>
    </location>
</feature>
<feature type="active site" description="Proton acceptor" evidence="1">
    <location>
        <position position="246"/>
    </location>
</feature>
<feature type="binding site" evidence="1">
    <location>
        <position position="84"/>
    </location>
    <ligand>
        <name>ATP</name>
        <dbReference type="ChEBI" id="CHEBI:30616"/>
    </ligand>
</feature>
<feature type="binding site" evidence="1">
    <location>
        <position position="86"/>
    </location>
    <ligand>
        <name>ATP</name>
        <dbReference type="ChEBI" id="CHEBI:30616"/>
    </ligand>
</feature>
<feature type="binding site" evidence="1">
    <location>
        <position position="87"/>
    </location>
    <ligand>
        <name>ATP</name>
        <dbReference type="ChEBI" id="CHEBI:30616"/>
    </ligand>
</feature>
<feature type="binding site" evidence="1">
    <location>
        <position position="107"/>
    </location>
    <ligand>
        <name>ATP</name>
        <dbReference type="ChEBI" id="CHEBI:30616"/>
    </ligand>
</feature>
<feature type="binding site" evidence="1">
    <location>
        <position position="119"/>
    </location>
    <ligand>
        <name>ATP</name>
        <dbReference type="ChEBI" id="CHEBI:30616"/>
    </ligand>
</feature>
<feature type="binding site" evidence="1">
    <location>
        <position position="120"/>
    </location>
    <ligand>
        <name>ATP</name>
        <dbReference type="ChEBI" id="CHEBI:30616"/>
    </ligand>
</feature>
<feature type="binding site" evidence="1">
    <location>
        <position position="170"/>
    </location>
    <ligand>
        <name>ATP</name>
        <dbReference type="ChEBI" id="CHEBI:30616"/>
    </ligand>
</feature>
<feature type="binding site" evidence="1">
    <location>
        <position position="177"/>
    </location>
    <ligand>
        <name>ATP</name>
        <dbReference type="ChEBI" id="CHEBI:30616"/>
    </ligand>
</feature>
<feature type="binding site" evidence="1">
    <location>
        <position position="247"/>
    </location>
    <ligand>
        <name>Mg(2+)</name>
        <dbReference type="ChEBI" id="CHEBI:18420"/>
    </ligand>
</feature>
<feature type="binding site" evidence="1">
    <location>
        <position position="256"/>
    </location>
    <ligand>
        <name>ATP</name>
        <dbReference type="ChEBI" id="CHEBI:30616"/>
    </ligand>
</feature>
<feature type="binding site" evidence="1">
    <location>
        <position position="256"/>
    </location>
    <ligand>
        <name>Mg(2+)</name>
        <dbReference type="ChEBI" id="CHEBI:18420"/>
    </ligand>
</feature>
<reference key="1">
    <citation type="journal article" date="2009" name="PLoS Genet.">
        <title>Organised genome dynamics in the Escherichia coli species results in highly diverse adaptive paths.</title>
        <authorList>
            <person name="Touchon M."/>
            <person name="Hoede C."/>
            <person name="Tenaillon O."/>
            <person name="Barbe V."/>
            <person name="Baeriswyl S."/>
            <person name="Bidet P."/>
            <person name="Bingen E."/>
            <person name="Bonacorsi S."/>
            <person name="Bouchier C."/>
            <person name="Bouvet O."/>
            <person name="Calteau A."/>
            <person name="Chiapello H."/>
            <person name="Clermont O."/>
            <person name="Cruveiller S."/>
            <person name="Danchin A."/>
            <person name="Diard M."/>
            <person name="Dossat C."/>
            <person name="Karoui M.E."/>
            <person name="Frapy E."/>
            <person name="Garry L."/>
            <person name="Ghigo J.M."/>
            <person name="Gilles A.M."/>
            <person name="Johnson J."/>
            <person name="Le Bouguenec C."/>
            <person name="Lescat M."/>
            <person name="Mangenot S."/>
            <person name="Martinez-Jehanne V."/>
            <person name="Matic I."/>
            <person name="Nassif X."/>
            <person name="Oztas S."/>
            <person name="Petit M.A."/>
            <person name="Pichon C."/>
            <person name="Rouy Z."/>
            <person name="Ruf C.S."/>
            <person name="Schneider D."/>
            <person name="Tourret J."/>
            <person name="Vacherie B."/>
            <person name="Vallenet D."/>
            <person name="Medigue C."/>
            <person name="Rocha E.P.C."/>
            <person name="Denamur E."/>
        </authorList>
    </citation>
    <scope>NUCLEOTIDE SEQUENCE [LARGE SCALE GENOMIC DNA]</scope>
    <source>
        <strain>ED1a</strain>
    </source>
</reference>
<sequence>MTLSFITRWRDELPETYTALSPTPLNNARLIWHNTELANTLSIPSSLFKNGAGVWGGETLLPGMSPLAQVYSGHQFGVWAGQLGDGRGILLGEQLLADGTTMDWHLKGAGLTPYSRMGDGRAVLRSTIRESLASEAMHYLGIPTTRALSIVTSDSPVYRETVESGAMLMRVAPSHLRFGHFEHFYYRREPEKVRQLADFAIRHYWSHLDDEEDKYRLWFTDVVARTASLIAQWQTVGFAHGVMNTDNMSLLGLTLDYGPFGFLDDYEPGFICNHSDHQGRYSFDNQPAVALWNLQRLAQTLSPFVAVDGLNEALDSYQQVLLTHYGQRMRQKLGFMTEQKEDNALLNELFSLMARERSDYTRTFRMLSLTEQHSAASPLRDEFIDRAAFDDWFARYRVRLQQDEVTDSERQQLMQSVNPALVLRNWLAQRAIEAAEKGDMTELHRLHEALRNPFSDRDDDYVSRPPDWGKRLEVSCSS</sequence>
<gene>
    <name evidence="1" type="primary">ydiU</name>
    <name evidence="1" type="synonym">selO</name>
    <name type="ordered locus">ECED1_1908</name>
</gene>
<accession>B7MVI5</accession>